<dbReference type="EMBL" id="AB086179">
    <property type="protein sequence ID" value="BAC55337.1"/>
    <property type="molecule type" value="Genomic_DNA"/>
</dbReference>
<dbReference type="EMBL" id="AB087429">
    <property type="protein sequence ID" value="BAC55428.1"/>
    <property type="molecule type" value="mRNA"/>
</dbReference>
<dbReference type="RefSeq" id="NP_777401.1">
    <property type="nucleotide sequence ID" value="NC_004543.1"/>
</dbReference>
<dbReference type="SMR" id="Q85BB6"/>
<dbReference type="GeneID" id="2553405"/>
<dbReference type="GO" id="GO:0009535">
    <property type="term" value="C:chloroplast thylakoid membrane"/>
    <property type="evidence" value="ECO:0007669"/>
    <property type="project" value="UniProtKB-SubCell"/>
</dbReference>
<dbReference type="GO" id="GO:0009539">
    <property type="term" value="C:photosystem II reaction center"/>
    <property type="evidence" value="ECO:0007669"/>
    <property type="project" value="InterPro"/>
</dbReference>
<dbReference type="GO" id="GO:0015979">
    <property type="term" value="P:photosynthesis"/>
    <property type="evidence" value="ECO:0007669"/>
    <property type="project" value="UniProtKB-UniRule"/>
</dbReference>
<dbReference type="HAMAP" id="MF_00441">
    <property type="entry name" value="PSII_PsbK"/>
    <property type="match status" value="1"/>
</dbReference>
<dbReference type="InterPro" id="IPR003687">
    <property type="entry name" value="PSII_PsbK"/>
</dbReference>
<dbReference type="InterPro" id="IPR037270">
    <property type="entry name" value="PSII_PsbK_sf"/>
</dbReference>
<dbReference type="NCBIfam" id="NF002715">
    <property type="entry name" value="PRK02553.1"/>
    <property type="match status" value="1"/>
</dbReference>
<dbReference type="PANTHER" id="PTHR35325">
    <property type="match status" value="1"/>
</dbReference>
<dbReference type="PANTHER" id="PTHR35325:SF1">
    <property type="entry name" value="PHOTOSYSTEM II REACTION CENTER PROTEIN K"/>
    <property type="match status" value="1"/>
</dbReference>
<dbReference type="Pfam" id="PF02533">
    <property type="entry name" value="PsbK"/>
    <property type="match status" value="1"/>
</dbReference>
<dbReference type="SUPFAM" id="SSF161037">
    <property type="entry name" value="Photosystem II reaction center protein K, PsbK"/>
    <property type="match status" value="1"/>
</dbReference>
<name>PSBK_ANTAG</name>
<reference key="1">
    <citation type="journal article" date="2003" name="Nucleic Acids Res.">
        <title>The complete nucleotide sequence of the hornwort (Anthoceros formosae) chloroplast genome: insight into the earliest land plants.</title>
        <authorList>
            <person name="Kugita M."/>
            <person name="Kaneko A."/>
            <person name="Yamamoto Y."/>
            <person name="Takeya Y."/>
            <person name="Matsumoto T."/>
            <person name="Yoshinaga K."/>
        </authorList>
    </citation>
    <scope>NUCLEOTIDE SEQUENCE [LARGE SCALE GENOMIC DNA]</scope>
    <scope>RNA EDITING</scope>
</reference>
<reference key="2">
    <citation type="journal article" date="2003" name="Nucleic Acids Res.">
        <title>RNA editing in hornwort chloroplasts makes more than half the genes functional.</title>
        <authorList>
            <person name="Kugita M."/>
            <person name="Yamamoto Y."/>
            <person name="Fujikawa T."/>
            <person name="Matsumoto T."/>
            <person name="Yoshinaga K."/>
        </authorList>
    </citation>
    <scope>NUCLEOTIDE SEQUENCE [MRNA]</scope>
    <scope>RNA EDITING</scope>
    <source>
        <tissue>Thallus</tissue>
    </source>
</reference>
<organism>
    <name type="scientific">Anthoceros angustus</name>
    <name type="common">Hornwort</name>
    <name type="synonym">Anthoceros formosae</name>
    <dbReference type="NCBI Taxonomy" id="48387"/>
    <lineage>
        <taxon>Eukaryota</taxon>
        <taxon>Viridiplantae</taxon>
        <taxon>Streptophyta</taxon>
        <taxon>Embryophyta</taxon>
        <taxon>Anthocerotophyta</taxon>
        <taxon>Anthocerotopsida</taxon>
        <taxon>Anthocerotidae</taxon>
        <taxon>Anthocerotales</taxon>
        <taxon>Anthocerotaceae</taxon>
        <taxon>Anthoceros</taxon>
    </lineage>
</organism>
<proteinExistence type="evidence at transcript level"/>
<evidence type="ECO:0000255" key="1">
    <source>
        <dbReference type="HAMAP-Rule" id="MF_00441"/>
    </source>
</evidence>
<evidence type="ECO:0000269" key="2">
    <source>
    </source>
</evidence>
<evidence type="ECO:0000269" key="3">
    <source>
    </source>
</evidence>
<gene>
    <name evidence="1" type="primary">psbK</name>
</gene>
<feature type="propeptide" id="PRO_0000432458" evidence="1">
    <location>
        <begin position="1"/>
        <end position="18"/>
    </location>
</feature>
<feature type="chain" id="PRO_0000029438" description="Photosystem II reaction center protein K" evidence="1">
    <location>
        <begin position="19"/>
        <end position="55"/>
    </location>
</feature>
<feature type="transmembrane region" description="Helical" evidence="1">
    <location>
        <begin position="26"/>
        <end position="46"/>
    </location>
</feature>
<accession>Q85BB6</accession>
<keyword id="KW-0150">Chloroplast</keyword>
<keyword id="KW-0472">Membrane</keyword>
<keyword id="KW-0602">Photosynthesis</keyword>
<keyword id="KW-0604">Photosystem II</keyword>
<keyword id="KW-0934">Plastid</keyword>
<keyword id="KW-0674">Reaction center</keyword>
<keyword id="KW-0691">RNA editing</keyword>
<keyword id="KW-0793">Thylakoid</keyword>
<keyword id="KW-0812">Transmembrane</keyword>
<keyword id="KW-1133">Transmembrane helix</keyword>
<geneLocation type="chloroplast"/>
<sequence>MFYIHLENTFDLSSTILVKLPEAYAIFDPIVDVMPIIPLFFFLLAFVWQASVSFR</sequence>
<protein>
    <recommendedName>
        <fullName evidence="1">Photosystem II reaction center protein K</fullName>
        <shortName evidence="1">PSII-K</shortName>
    </recommendedName>
</protein>
<comment type="function">
    <text evidence="1">One of the components of the core complex of photosystem II (PSII). PSII is a light-driven water:plastoquinone oxidoreductase that uses light energy to abstract electrons from H(2)O, generating O(2) and a proton gradient subsequently used for ATP formation. It consists of a core antenna complex that captures photons, and an electron transfer chain that converts photonic excitation into a charge separation.</text>
</comment>
<comment type="subunit">
    <text evidence="1">PSII is composed of 1 copy each of membrane proteins PsbA, PsbB, PsbC, PsbD, PsbE, PsbF, PsbH, PsbI, PsbJ, PsbK, PsbL, PsbM, PsbT, PsbX, PsbY, PsbZ, Psb30/Ycf12, at least 3 peripheral proteins of the oxygen-evolving complex and a large number of cofactors. It forms dimeric complexes.</text>
</comment>
<comment type="subcellular location">
    <subcellularLocation>
        <location evidence="1">Plastid</location>
        <location evidence="1">Chloroplast thylakoid membrane</location>
        <topology evidence="1">Single-pass membrane protein</topology>
    </subcellularLocation>
</comment>
<comment type="RNA editing">
    <location>
        <position position="17" evidence="2 3"/>
    </location>
    <location>
        <position position="20" evidence="2 3"/>
    </location>
</comment>
<comment type="similarity">
    <text evidence="1">Belongs to the PsbK family.</text>
</comment>